<reference key="1">
    <citation type="journal article" date="1995" name="Gene">
        <title>Cloning and sequencing of a secY homolog from Streptomyces scabies.</title>
        <authorList>
            <person name="Hale V.A."/>
            <person name="O'Brien I."/>
            <person name="Schottel J.L."/>
        </authorList>
    </citation>
    <scope>NUCLEOTIDE SEQUENCE [GENOMIC DNA]</scope>
    <source>
        <strain>FL1</strain>
    </source>
</reference>
<gene>
    <name type="primary">adk</name>
</gene>
<accession>P43417</accession>
<comment type="function">
    <text evidence="1">Catalyzes the reversible transfer of the terminal phosphate group between ATP and AMP. Plays an important role in cellular energy homeostasis and in adenine nucleotide metabolism.</text>
</comment>
<comment type="catalytic activity">
    <reaction evidence="2">
        <text>AMP + ATP = 2 ADP</text>
        <dbReference type="Rhea" id="RHEA:12973"/>
        <dbReference type="ChEBI" id="CHEBI:30616"/>
        <dbReference type="ChEBI" id="CHEBI:456215"/>
        <dbReference type="ChEBI" id="CHEBI:456216"/>
        <dbReference type="EC" id="2.7.4.3"/>
    </reaction>
</comment>
<comment type="pathway">
    <text evidence="2">Purine metabolism; AMP biosynthesis via salvage pathway; AMP from ADP: step 1/1.</text>
</comment>
<comment type="subunit">
    <text evidence="2">Monomer.</text>
</comment>
<comment type="subcellular location">
    <subcellularLocation>
        <location evidence="2">Cytoplasm</location>
    </subcellularLocation>
</comment>
<comment type="domain">
    <text evidence="2">Consists of three domains, a large central CORE domain and two small peripheral domains, NMPbind and LID, which undergo movements during catalysis. The LID domain closes over the site of phosphoryl transfer upon ATP binding. Assembling and dissambling the active center during each catalytic cycle provides an effective means to prevent ATP hydrolysis.</text>
</comment>
<comment type="similarity">
    <text evidence="3">Belongs to the adenylate kinase family.</text>
</comment>
<organism>
    <name type="scientific">Streptomyces scabiei</name>
    <dbReference type="NCBI Taxonomy" id="1930"/>
    <lineage>
        <taxon>Bacteria</taxon>
        <taxon>Bacillati</taxon>
        <taxon>Actinomycetota</taxon>
        <taxon>Actinomycetes</taxon>
        <taxon>Kitasatosporales</taxon>
        <taxon>Streptomycetaceae</taxon>
        <taxon>Streptomyces</taxon>
    </lineage>
</organism>
<keyword id="KW-0067">ATP-binding</keyword>
<keyword id="KW-0963">Cytoplasm</keyword>
<keyword id="KW-0418">Kinase</keyword>
<keyword id="KW-0545">Nucleotide biosynthesis</keyword>
<keyword id="KW-0547">Nucleotide-binding</keyword>
<keyword id="KW-0808">Transferase</keyword>
<evidence type="ECO:0000250" key="1"/>
<evidence type="ECO:0000250" key="2">
    <source>
        <dbReference type="UniProtKB" id="P69441"/>
    </source>
</evidence>
<evidence type="ECO:0000305" key="3"/>
<name>KAD_STRSC</name>
<proteinExistence type="inferred from homology"/>
<sequence>MRIVLVGPPGAGKGTQAAFLARNLSIPHISTGDLFRANISKQTELGKLAKSYMDKGELVPDEVTIAMAKD</sequence>
<feature type="chain" id="PRO_0000158866" description="Adenylate kinase">
    <location>
        <begin position="1"/>
        <end position="70" status="greater than"/>
    </location>
</feature>
<feature type="region of interest" description="NMP" evidence="2">
    <location>
        <begin position="30"/>
        <end position="59"/>
    </location>
</feature>
<feature type="binding site" evidence="2">
    <location>
        <begin position="10"/>
        <end position="15"/>
    </location>
    <ligand>
        <name>ATP</name>
        <dbReference type="ChEBI" id="CHEBI:30616"/>
    </ligand>
</feature>
<feature type="binding site" evidence="2">
    <location>
        <position position="31"/>
    </location>
    <ligand>
        <name>AMP</name>
        <dbReference type="ChEBI" id="CHEBI:456215"/>
    </ligand>
</feature>
<feature type="binding site" evidence="2">
    <location>
        <position position="36"/>
    </location>
    <ligand>
        <name>AMP</name>
        <dbReference type="ChEBI" id="CHEBI:456215"/>
    </ligand>
</feature>
<feature type="binding site" evidence="2">
    <location>
        <begin position="57"/>
        <end position="59"/>
    </location>
    <ligand>
        <name>AMP</name>
        <dbReference type="ChEBI" id="CHEBI:456215"/>
    </ligand>
</feature>
<feature type="non-terminal residue">
    <location>
        <position position="70"/>
    </location>
</feature>
<protein>
    <recommendedName>
        <fullName>Adenylate kinase</fullName>
        <shortName>AK</shortName>
        <ecNumber>2.7.4.3</ecNumber>
    </recommendedName>
    <alternativeName>
        <fullName>ATP-AMP transphosphorylase</fullName>
    </alternativeName>
    <alternativeName>
        <fullName>ATP:AMP phosphotransferase</fullName>
    </alternativeName>
    <alternativeName>
        <fullName>Adenylate monophosphate kinase</fullName>
    </alternativeName>
</protein>
<dbReference type="EC" id="2.7.4.3"/>
<dbReference type="EMBL" id="U19606">
    <property type="protein sequence ID" value="AAA85557.1"/>
    <property type="molecule type" value="Genomic_DNA"/>
</dbReference>
<dbReference type="PIR" id="PC4087">
    <property type="entry name" value="PC4087"/>
</dbReference>
<dbReference type="SMR" id="P43417"/>
<dbReference type="UniPathway" id="UPA00588">
    <property type="reaction ID" value="UER00649"/>
</dbReference>
<dbReference type="GO" id="GO:0005737">
    <property type="term" value="C:cytoplasm"/>
    <property type="evidence" value="ECO:0007669"/>
    <property type="project" value="UniProtKB-SubCell"/>
</dbReference>
<dbReference type="GO" id="GO:0004017">
    <property type="term" value="F:adenylate kinase activity"/>
    <property type="evidence" value="ECO:0007669"/>
    <property type="project" value="UniProtKB-EC"/>
</dbReference>
<dbReference type="GO" id="GO:0005524">
    <property type="term" value="F:ATP binding"/>
    <property type="evidence" value="ECO:0007669"/>
    <property type="project" value="UniProtKB-KW"/>
</dbReference>
<dbReference type="GO" id="GO:0044209">
    <property type="term" value="P:AMP salvage"/>
    <property type="evidence" value="ECO:0007669"/>
    <property type="project" value="UniProtKB-UniPathway"/>
</dbReference>
<dbReference type="CDD" id="cd01428">
    <property type="entry name" value="ADK"/>
    <property type="match status" value="1"/>
</dbReference>
<dbReference type="Gene3D" id="3.40.50.300">
    <property type="entry name" value="P-loop containing nucleotide triphosphate hydrolases"/>
    <property type="match status" value="1"/>
</dbReference>
<dbReference type="InterPro" id="IPR000850">
    <property type="entry name" value="Adenylat/UMP-CMP_kin"/>
</dbReference>
<dbReference type="InterPro" id="IPR027417">
    <property type="entry name" value="P-loop_NTPase"/>
</dbReference>
<dbReference type="PANTHER" id="PTHR23359">
    <property type="entry name" value="NUCLEOTIDE KINASE"/>
    <property type="match status" value="1"/>
</dbReference>
<dbReference type="Pfam" id="PF00406">
    <property type="entry name" value="ADK"/>
    <property type="match status" value="1"/>
</dbReference>
<dbReference type="PRINTS" id="PR00094">
    <property type="entry name" value="ADENYLTKNASE"/>
</dbReference>
<dbReference type="SUPFAM" id="SSF52540">
    <property type="entry name" value="P-loop containing nucleoside triphosphate hydrolases"/>
    <property type="match status" value="1"/>
</dbReference>